<keyword id="KW-0378">Hydrolase</keyword>
<keyword id="KW-0460">Magnesium</keyword>
<keyword id="KW-0479">Metal-binding</keyword>
<keyword id="KW-0546">Nucleotide metabolism</keyword>
<keyword id="KW-0547">Nucleotide-binding</keyword>
<keyword id="KW-1185">Reference proteome</keyword>
<protein>
    <recommendedName>
        <fullName evidence="1">dITP/XTP pyrophosphatase</fullName>
        <ecNumber evidence="1">3.6.1.66</ecNumber>
    </recommendedName>
    <alternativeName>
        <fullName evidence="1">Non-canonical purine NTP pyrophosphatase</fullName>
    </alternativeName>
    <alternativeName>
        <fullName evidence="1">Non-standard purine NTP pyrophosphatase</fullName>
    </alternativeName>
    <alternativeName>
        <fullName evidence="1">Nucleoside-triphosphate diphosphatase</fullName>
    </alternativeName>
    <alternativeName>
        <fullName evidence="1">Nucleoside-triphosphate pyrophosphatase</fullName>
        <shortName evidence="1">NTPase</shortName>
    </alternativeName>
</protein>
<proteinExistence type="inferred from homology"/>
<sequence>MSQKRLVLATKNQGKVREFRSLLAGAGFEIVGLDPDAPEVSETGDTFEENALIKARAASALTGLPALAEDSGIVVDALGGEPGVHSARWVPGSDEDRVRALLARMAEVPAERRTARYVSVIAVVLPSGREELFRGELEGRLAEAPRGTGGFGYDPIFVVADGRTVAEMALEEKNGISHRSRALARCLERLPALLEEG</sequence>
<feature type="chain" id="PRO_0000178248" description="dITP/XTP pyrophosphatase">
    <location>
        <begin position="1"/>
        <end position="197"/>
    </location>
</feature>
<feature type="active site" description="Proton acceptor" evidence="1">
    <location>
        <position position="70"/>
    </location>
</feature>
<feature type="binding site" evidence="1">
    <location>
        <begin position="10"/>
        <end position="15"/>
    </location>
    <ligand>
        <name>substrate</name>
    </ligand>
</feature>
<feature type="binding site" evidence="1">
    <location>
        <position position="70"/>
    </location>
    <ligand>
        <name>Mg(2+)</name>
        <dbReference type="ChEBI" id="CHEBI:18420"/>
    </ligand>
</feature>
<feature type="binding site" evidence="1">
    <location>
        <position position="71"/>
    </location>
    <ligand>
        <name>substrate</name>
    </ligand>
</feature>
<feature type="binding site" evidence="1">
    <location>
        <begin position="151"/>
        <end position="154"/>
    </location>
    <ligand>
        <name>substrate</name>
    </ligand>
</feature>
<feature type="binding site" evidence="1">
    <location>
        <position position="173"/>
    </location>
    <ligand>
        <name>substrate</name>
    </ligand>
</feature>
<feature type="binding site" evidence="1">
    <location>
        <begin position="178"/>
        <end position="179"/>
    </location>
    <ligand>
        <name>substrate</name>
    </ligand>
</feature>
<reference key="1">
    <citation type="journal article" date="2004" name="Nucleic Acids Res.">
        <title>Genome sequence of Symbiobacterium thermophilum, an uncultivable bacterium that depends on microbial commensalism.</title>
        <authorList>
            <person name="Ueda K."/>
            <person name="Yamashita A."/>
            <person name="Ishikawa J."/>
            <person name="Shimada M."/>
            <person name="Watsuji T."/>
            <person name="Morimura K."/>
            <person name="Ikeda H."/>
            <person name="Hattori M."/>
            <person name="Beppu T."/>
        </authorList>
    </citation>
    <scope>NUCLEOTIDE SEQUENCE [LARGE SCALE GENOMIC DNA]</scope>
    <source>
        <strain>DSM 24528 / JCM 14929 / IAM 14863 / T</strain>
    </source>
</reference>
<gene>
    <name type="ordered locus">STH344</name>
</gene>
<organism>
    <name type="scientific">Symbiobacterium thermophilum (strain DSM 24528 / JCM 14929 / IAM 14863 / T)</name>
    <dbReference type="NCBI Taxonomy" id="292459"/>
    <lineage>
        <taxon>Bacteria</taxon>
        <taxon>Bacillati</taxon>
        <taxon>Bacillota</taxon>
        <taxon>Clostridia</taxon>
        <taxon>Eubacteriales</taxon>
        <taxon>Symbiobacteriaceae</taxon>
        <taxon>Symbiobacterium</taxon>
    </lineage>
</organism>
<accession>Q67SL4</accession>
<comment type="function">
    <text evidence="1">Pyrophosphatase that catalyzes the hydrolysis of nucleoside triphosphates to their monophosphate derivatives, with a high preference for the non-canonical purine nucleotides XTP (xanthosine triphosphate), dITP (deoxyinosine triphosphate) and ITP. Seems to function as a house-cleaning enzyme that removes non-canonical purine nucleotides from the nucleotide pool, thus preventing their incorporation into DNA/RNA and avoiding chromosomal lesions.</text>
</comment>
<comment type="catalytic activity">
    <reaction evidence="1">
        <text>XTP + H2O = XMP + diphosphate + H(+)</text>
        <dbReference type="Rhea" id="RHEA:28610"/>
        <dbReference type="ChEBI" id="CHEBI:15377"/>
        <dbReference type="ChEBI" id="CHEBI:15378"/>
        <dbReference type="ChEBI" id="CHEBI:33019"/>
        <dbReference type="ChEBI" id="CHEBI:57464"/>
        <dbReference type="ChEBI" id="CHEBI:61314"/>
        <dbReference type="EC" id="3.6.1.66"/>
    </reaction>
</comment>
<comment type="catalytic activity">
    <reaction evidence="1">
        <text>dITP + H2O = dIMP + diphosphate + H(+)</text>
        <dbReference type="Rhea" id="RHEA:28342"/>
        <dbReference type="ChEBI" id="CHEBI:15377"/>
        <dbReference type="ChEBI" id="CHEBI:15378"/>
        <dbReference type="ChEBI" id="CHEBI:33019"/>
        <dbReference type="ChEBI" id="CHEBI:61194"/>
        <dbReference type="ChEBI" id="CHEBI:61382"/>
        <dbReference type="EC" id="3.6.1.66"/>
    </reaction>
</comment>
<comment type="catalytic activity">
    <reaction evidence="1">
        <text>ITP + H2O = IMP + diphosphate + H(+)</text>
        <dbReference type="Rhea" id="RHEA:29399"/>
        <dbReference type="ChEBI" id="CHEBI:15377"/>
        <dbReference type="ChEBI" id="CHEBI:15378"/>
        <dbReference type="ChEBI" id="CHEBI:33019"/>
        <dbReference type="ChEBI" id="CHEBI:58053"/>
        <dbReference type="ChEBI" id="CHEBI:61402"/>
        <dbReference type="EC" id="3.6.1.66"/>
    </reaction>
</comment>
<comment type="cofactor">
    <cofactor evidence="1">
        <name>Mg(2+)</name>
        <dbReference type="ChEBI" id="CHEBI:18420"/>
    </cofactor>
    <text evidence="1">Binds 1 Mg(2+) ion per subunit.</text>
</comment>
<comment type="subunit">
    <text evidence="1">Homodimer.</text>
</comment>
<comment type="similarity">
    <text evidence="1">Belongs to the HAM1 NTPase family.</text>
</comment>
<evidence type="ECO:0000255" key="1">
    <source>
        <dbReference type="HAMAP-Rule" id="MF_01405"/>
    </source>
</evidence>
<dbReference type="EC" id="3.6.1.66" evidence="1"/>
<dbReference type="EMBL" id="AP006840">
    <property type="protein sequence ID" value="BAD39329.1"/>
    <property type="molecule type" value="Genomic_DNA"/>
</dbReference>
<dbReference type="SMR" id="Q67SL4"/>
<dbReference type="STRING" id="292459.STH344"/>
<dbReference type="KEGG" id="sth:STH344"/>
<dbReference type="eggNOG" id="COG0127">
    <property type="taxonomic scope" value="Bacteria"/>
</dbReference>
<dbReference type="HOGENOM" id="CLU_082080_0_3_9"/>
<dbReference type="OrthoDB" id="9807456at2"/>
<dbReference type="Proteomes" id="UP000000417">
    <property type="component" value="Chromosome"/>
</dbReference>
<dbReference type="GO" id="GO:0005829">
    <property type="term" value="C:cytosol"/>
    <property type="evidence" value="ECO:0007669"/>
    <property type="project" value="TreeGrafter"/>
</dbReference>
<dbReference type="GO" id="GO:0035870">
    <property type="term" value="F:dITP diphosphatase activity"/>
    <property type="evidence" value="ECO:0007669"/>
    <property type="project" value="RHEA"/>
</dbReference>
<dbReference type="GO" id="GO:0036220">
    <property type="term" value="F:ITP diphosphatase activity"/>
    <property type="evidence" value="ECO:0007669"/>
    <property type="project" value="UniProtKB-EC"/>
</dbReference>
<dbReference type="GO" id="GO:0046872">
    <property type="term" value="F:metal ion binding"/>
    <property type="evidence" value="ECO:0007669"/>
    <property type="project" value="UniProtKB-KW"/>
</dbReference>
<dbReference type="GO" id="GO:0000166">
    <property type="term" value="F:nucleotide binding"/>
    <property type="evidence" value="ECO:0007669"/>
    <property type="project" value="UniProtKB-KW"/>
</dbReference>
<dbReference type="GO" id="GO:0017111">
    <property type="term" value="F:ribonucleoside triphosphate phosphatase activity"/>
    <property type="evidence" value="ECO:0007669"/>
    <property type="project" value="InterPro"/>
</dbReference>
<dbReference type="GO" id="GO:0036222">
    <property type="term" value="F:XTP diphosphatase activity"/>
    <property type="evidence" value="ECO:0007669"/>
    <property type="project" value="RHEA"/>
</dbReference>
<dbReference type="GO" id="GO:0009117">
    <property type="term" value="P:nucleotide metabolic process"/>
    <property type="evidence" value="ECO:0007669"/>
    <property type="project" value="UniProtKB-KW"/>
</dbReference>
<dbReference type="GO" id="GO:0009146">
    <property type="term" value="P:purine nucleoside triphosphate catabolic process"/>
    <property type="evidence" value="ECO:0007669"/>
    <property type="project" value="UniProtKB-UniRule"/>
</dbReference>
<dbReference type="CDD" id="cd00515">
    <property type="entry name" value="HAM1"/>
    <property type="match status" value="1"/>
</dbReference>
<dbReference type="FunFam" id="3.90.950.10:FF:000001">
    <property type="entry name" value="dITP/XTP pyrophosphatase"/>
    <property type="match status" value="1"/>
</dbReference>
<dbReference type="Gene3D" id="3.90.950.10">
    <property type="match status" value="1"/>
</dbReference>
<dbReference type="HAMAP" id="MF_01405">
    <property type="entry name" value="Non_canon_purine_NTPase"/>
    <property type="match status" value="1"/>
</dbReference>
<dbReference type="InterPro" id="IPR020922">
    <property type="entry name" value="dITP/XTP_pyrophosphatase"/>
</dbReference>
<dbReference type="InterPro" id="IPR029001">
    <property type="entry name" value="ITPase-like_fam"/>
</dbReference>
<dbReference type="InterPro" id="IPR002637">
    <property type="entry name" value="RdgB/HAM1"/>
</dbReference>
<dbReference type="NCBIfam" id="TIGR00042">
    <property type="entry name" value="RdgB/HAM1 family non-canonical purine NTP pyrophosphatase"/>
    <property type="match status" value="1"/>
</dbReference>
<dbReference type="PANTHER" id="PTHR11067:SF9">
    <property type="entry name" value="INOSINE TRIPHOSPHATE PYROPHOSPHATASE"/>
    <property type="match status" value="1"/>
</dbReference>
<dbReference type="PANTHER" id="PTHR11067">
    <property type="entry name" value="INOSINE TRIPHOSPHATE PYROPHOSPHATASE/HAM1 PROTEIN"/>
    <property type="match status" value="1"/>
</dbReference>
<dbReference type="Pfam" id="PF01725">
    <property type="entry name" value="Ham1p_like"/>
    <property type="match status" value="1"/>
</dbReference>
<dbReference type="SUPFAM" id="SSF52972">
    <property type="entry name" value="ITPase-like"/>
    <property type="match status" value="1"/>
</dbReference>
<name>IXTPA_SYMTH</name>